<keyword id="KW-0002">3D-structure</keyword>
<keyword id="KW-0175">Coiled coil</keyword>
<keyword id="KW-0472">Membrane</keyword>
<keyword id="KW-0509">mRNA transport</keyword>
<keyword id="KW-0906">Nuclear pore complex</keyword>
<keyword id="KW-0539">Nucleus</keyword>
<keyword id="KW-0653">Protein transport</keyword>
<keyword id="KW-1185">Reference proteome</keyword>
<keyword id="KW-0811">Translocation</keyword>
<keyword id="KW-0813">Transport</keyword>
<accession>G0S7F3</accession>
<accession>G0ZGT9</accession>
<sequence>MAGSSPLNHHLWSSPSRTVEEILAEDRNSEARHRYLLELARKEHERVREEAARIYREQLAREERERLLAERRKEEERIRLEQQIAAENARLNALKATRIEIPPLLPDPVPAPSTVNGKPTLPAAVATEAKRCPSEPSLVNGIASNGVVEAPAAASIKTLEPAKPAASAFKAAGSATTAAPVAPIASVQPSTNGVVSAVASTPKTAPPAPTETPPDRYVEIHRNLKGLRKYMAEQAKTNLKLKQRMGDMRREIRKSVGQLTTGGMAANKDKQQKIKSILTEALSNQVESALVDPNNFVVEPRKPVEGATNNDPLLPSIFVYLINIFAKAAISQFINEAGARPETADPVGICVAAILSEPDFLWRGASLIDILIAKFRIVCPVLFGYRGSEKTEQGRQRLGWWKESGQWISEQQHMDRMTGLGAGFAAISLRKFALSKKQNPYPPRFYWMAMAKIVNTPPAEISNTQCVVLKAMVQNYEAKFIEFYGSAAIAALRTALIDFPARAPHKSAAVNSLEVLAQMLKRDTGLDLG</sequence>
<evidence type="ECO:0000250" key="1">
    <source>
        <dbReference type="UniProtKB" id="Q12315"/>
    </source>
</evidence>
<evidence type="ECO:0000255" key="2"/>
<evidence type="ECO:0000255" key="3">
    <source>
        <dbReference type="PROSITE-ProRule" id="PRU00768"/>
    </source>
</evidence>
<evidence type="ECO:0000303" key="4">
    <source>
    </source>
</evidence>
<evidence type="ECO:0000305" key="5"/>
<evidence type="ECO:0000305" key="6">
    <source>
    </source>
</evidence>
<evidence type="ECO:0007829" key="7">
    <source>
        <dbReference type="PDB" id="6B4H"/>
    </source>
</evidence>
<dbReference type="EMBL" id="GL988041">
    <property type="protein sequence ID" value="EGS20955.1"/>
    <property type="molecule type" value="Genomic_DNA"/>
</dbReference>
<dbReference type="EMBL" id="JF276279">
    <property type="protein sequence ID" value="AEL00677.1"/>
    <property type="molecule type" value="Genomic_DNA"/>
</dbReference>
<dbReference type="RefSeq" id="XP_006693251.1">
    <property type="nucleotide sequence ID" value="XM_006693188.1"/>
</dbReference>
<dbReference type="PDB" id="6B4G">
    <property type="method" value="X-ray"/>
    <property type="resolution" value="2.65 A"/>
    <property type="chains" value="A/C/E/G=216-529"/>
</dbReference>
<dbReference type="PDB" id="6B4H">
    <property type="method" value="X-ray"/>
    <property type="resolution" value="2.17 A"/>
    <property type="chains" value="A/C=216-529"/>
</dbReference>
<dbReference type="PDBsum" id="6B4G"/>
<dbReference type="PDBsum" id="6B4H"/>
<dbReference type="SMR" id="G0S7F3"/>
<dbReference type="STRING" id="759272.G0S7F3"/>
<dbReference type="TCDB" id="1.I.1.1.2">
    <property type="family name" value="the nuclear pore complex (npc) family"/>
</dbReference>
<dbReference type="GeneID" id="18256832"/>
<dbReference type="KEGG" id="cthr:CTHT_0027940"/>
<dbReference type="eggNOG" id="KOG2412">
    <property type="taxonomic scope" value="Eukaryota"/>
</dbReference>
<dbReference type="HOGENOM" id="CLU_018821_0_0_1"/>
<dbReference type="OMA" id="ILWAKYR"/>
<dbReference type="OrthoDB" id="420884at2759"/>
<dbReference type="Proteomes" id="UP000008066">
    <property type="component" value="Unassembled WGS sequence"/>
</dbReference>
<dbReference type="GO" id="GO:0005737">
    <property type="term" value="C:cytoplasm"/>
    <property type="evidence" value="ECO:0007669"/>
    <property type="project" value="TreeGrafter"/>
</dbReference>
<dbReference type="GO" id="GO:0031965">
    <property type="term" value="C:nuclear membrane"/>
    <property type="evidence" value="ECO:0007669"/>
    <property type="project" value="UniProtKB-SubCell"/>
</dbReference>
<dbReference type="GO" id="GO:0044614">
    <property type="term" value="C:nuclear pore cytoplasmic filaments"/>
    <property type="evidence" value="ECO:0007669"/>
    <property type="project" value="TreeGrafter"/>
</dbReference>
<dbReference type="GO" id="GO:0000822">
    <property type="term" value="F:inositol hexakisphosphate binding"/>
    <property type="evidence" value="ECO:0007669"/>
    <property type="project" value="TreeGrafter"/>
</dbReference>
<dbReference type="GO" id="GO:0005543">
    <property type="term" value="F:phospholipid binding"/>
    <property type="evidence" value="ECO:0007669"/>
    <property type="project" value="TreeGrafter"/>
</dbReference>
<dbReference type="GO" id="GO:0031369">
    <property type="term" value="F:translation initiation factor binding"/>
    <property type="evidence" value="ECO:0007669"/>
    <property type="project" value="TreeGrafter"/>
</dbReference>
<dbReference type="GO" id="GO:0016973">
    <property type="term" value="P:poly(A)+ mRNA export from nucleus"/>
    <property type="evidence" value="ECO:0007669"/>
    <property type="project" value="InterPro"/>
</dbReference>
<dbReference type="GO" id="GO:0015031">
    <property type="term" value="P:protein transport"/>
    <property type="evidence" value="ECO:0007669"/>
    <property type="project" value="UniProtKB-KW"/>
</dbReference>
<dbReference type="FunFam" id="1.25.40.510:FF:000004">
    <property type="entry name" value="Putative RNA export mediator Gle1"/>
    <property type="match status" value="1"/>
</dbReference>
<dbReference type="Gene3D" id="1.25.40.510">
    <property type="entry name" value="GLE1-like"/>
    <property type="match status" value="1"/>
</dbReference>
<dbReference type="InterPro" id="IPR012476">
    <property type="entry name" value="GLE1"/>
</dbReference>
<dbReference type="InterPro" id="IPR038506">
    <property type="entry name" value="GLE1-like_sf"/>
</dbReference>
<dbReference type="PANTHER" id="PTHR12960">
    <property type="entry name" value="GLE-1-RELATED"/>
    <property type="match status" value="1"/>
</dbReference>
<dbReference type="PANTHER" id="PTHR12960:SF0">
    <property type="entry name" value="MRNA EXPORT FACTOR GLE1"/>
    <property type="match status" value="1"/>
</dbReference>
<dbReference type="Pfam" id="PF07817">
    <property type="entry name" value="GLE1"/>
    <property type="match status" value="1"/>
</dbReference>
<gene>
    <name type="primary">GLE1</name>
    <name type="ORF">CTHT_0027940</name>
</gene>
<organism>
    <name type="scientific">Chaetomium thermophilum (strain DSM 1495 / CBS 144.50 / IMI 039719)</name>
    <name type="common">Thermochaetoides thermophila</name>
    <dbReference type="NCBI Taxonomy" id="759272"/>
    <lineage>
        <taxon>Eukaryota</taxon>
        <taxon>Fungi</taxon>
        <taxon>Dikarya</taxon>
        <taxon>Ascomycota</taxon>
        <taxon>Pezizomycotina</taxon>
        <taxon>Sordariomycetes</taxon>
        <taxon>Sordariomycetidae</taxon>
        <taxon>Sordariales</taxon>
        <taxon>Chaetomiaceae</taxon>
        <taxon>Thermochaetoides</taxon>
    </lineage>
</organism>
<proteinExistence type="evidence at protein level"/>
<comment type="function">
    <text evidence="1">Functions as a component of the nuclear pore complex (NPC). NPC components, collectively referred to as nucleoporins (NUPs), can play the role of both NPC structural components and of docking or interaction partners for transiently associated nuclear transport factors.</text>
</comment>
<comment type="subunit">
    <text evidence="1 6">Component of the nuclear pore complex (NPC). NPC constitutes the exclusive means of nucleocytoplasmic transport. NPCs allow the passive diffusion of ions and small molecules and the active, nuclear transport receptor-mediated bidirectional transport of macromolecules such as proteins, RNAs, ribonucleoparticles (RNPs), and ribosomal subunits across the nuclear envelope. Due to its 8-fold rotational symmetry, all subunits are present with 8 copies or multiples thereof.</text>
</comment>
<comment type="subcellular location">
    <subcellularLocation>
        <location evidence="1">Nucleus</location>
        <location evidence="1">Nuclear pore complex</location>
    </subcellularLocation>
    <subcellularLocation>
        <location evidence="1">Nucleus membrane</location>
        <topology evidence="1">Peripheral membrane protein</topology>
        <orientation evidence="1">Cytoplasmic side</orientation>
    </subcellularLocation>
    <subcellularLocation>
        <location evidence="1">Nucleus membrane</location>
        <topology evidence="1">Peripheral membrane protein</topology>
        <orientation evidence="1">Nucleoplasmic side</orientation>
    </subcellularLocation>
    <text evidence="1">Biased towards cytoplasmic side.</text>
</comment>
<comment type="similarity">
    <text evidence="5">Belongs to the GLE1 family.</text>
</comment>
<reference key="1">
    <citation type="journal article" date="2011" name="Cell">
        <title>Insight into structure and assembly of the nuclear pore complex by utilizing the genome of a eukaryotic thermophile.</title>
        <authorList>
            <person name="Amlacher S."/>
            <person name="Sarges P."/>
            <person name="Flemming D."/>
            <person name="van Noort V."/>
            <person name="Kunze R."/>
            <person name="Devos D.P."/>
            <person name="Arumugam M."/>
            <person name="Bork P."/>
            <person name="Hurt E."/>
        </authorList>
    </citation>
    <scope>NUCLEOTIDE SEQUENCE [LARGE SCALE GENOMIC DNA]</scope>
    <source>
        <strain>DSM 1495 / CBS 144.50 / IMI 039719</strain>
    </source>
</reference>
<feature type="chain" id="PRO_0000433174" description="mRNA export factor GLE1">
    <location>
        <begin position="1"/>
        <end position="529"/>
    </location>
</feature>
<feature type="coiled-coil region" evidence="2">
    <location>
        <begin position="36"/>
        <end position="101"/>
    </location>
</feature>
<feature type="short sequence motif" description="Nuclear localization signal" evidence="3">
    <location>
        <begin position="227"/>
        <end position="234"/>
    </location>
</feature>
<feature type="helix" evidence="7">
    <location>
        <begin position="216"/>
        <end position="235"/>
    </location>
</feature>
<feature type="helix" evidence="7">
    <location>
        <begin position="239"/>
        <end position="257"/>
    </location>
</feature>
<feature type="turn" evidence="7">
    <location>
        <begin position="258"/>
        <end position="261"/>
    </location>
</feature>
<feature type="helix" evidence="7">
    <location>
        <begin position="264"/>
        <end position="283"/>
    </location>
</feature>
<feature type="turn" evidence="7">
    <location>
        <begin position="284"/>
        <end position="286"/>
    </location>
</feature>
<feature type="helix" evidence="7">
    <location>
        <begin position="293"/>
        <end position="296"/>
    </location>
</feature>
<feature type="strand" evidence="7">
    <location>
        <begin position="297"/>
        <end position="299"/>
    </location>
</feature>
<feature type="helix" evidence="7">
    <location>
        <begin position="316"/>
        <end position="335"/>
    </location>
</feature>
<feature type="turn" evidence="7">
    <location>
        <begin position="336"/>
        <end position="339"/>
    </location>
</feature>
<feature type="helix" evidence="7">
    <location>
        <begin position="341"/>
        <end position="343"/>
    </location>
</feature>
<feature type="helix" evidence="7">
    <location>
        <begin position="344"/>
        <end position="355"/>
    </location>
</feature>
<feature type="helix" evidence="7">
    <location>
        <begin position="358"/>
        <end position="360"/>
    </location>
</feature>
<feature type="helix" evidence="7">
    <location>
        <begin position="369"/>
        <end position="378"/>
    </location>
</feature>
<feature type="helix" evidence="7">
    <location>
        <begin position="380"/>
        <end position="383"/>
    </location>
</feature>
<feature type="helix" evidence="7">
    <location>
        <begin position="392"/>
        <end position="397"/>
    </location>
</feature>
<feature type="helix" evidence="7">
    <location>
        <begin position="410"/>
        <end position="428"/>
    </location>
</feature>
<feature type="strand" evidence="7">
    <location>
        <begin position="435"/>
        <end position="437"/>
    </location>
</feature>
<feature type="helix" evidence="7">
    <location>
        <begin position="444"/>
        <end position="454"/>
    </location>
</feature>
<feature type="helix" evidence="7">
    <location>
        <begin position="458"/>
        <end position="460"/>
    </location>
</feature>
<feature type="helix" evidence="7">
    <location>
        <begin position="463"/>
        <end position="473"/>
    </location>
</feature>
<feature type="turn" evidence="7">
    <location>
        <begin position="474"/>
        <end position="476"/>
    </location>
</feature>
<feature type="helix" evidence="7">
    <location>
        <begin position="477"/>
        <end position="484"/>
    </location>
</feature>
<feature type="helix" evidence="7">
    <location>
        <begin position="486"/>
        <end position="496"/>
    </location>
</feature>
<feature type="helix" evidence="7">
    <location>
        <begin position="498"/>
        <end position="501"/>
    </location>
</feature>
<feature type="helix" evidence="7">
    <location>
        <begin position="508"/>
        <end position="522"/>
    </location>
</feature>
<protein>
    <recommendedName>
        <fullName evidence="5">mRNA export factor GLE1</fullName>
    </recommendedName>
    <alternativeName>
        <fullName evidence="5">Nuclear pore protein GLE1</fullName>
    </alternativeName>
    <alternativeName>
        <fullName evidence="4">Nucleoporin GLE1</fullName>
    </alternativeName>
    <alternativeName>
        <fullName evidence="5">RNA export factor GLE1</fullName>
    </alternativeName>
</protein>
<name>GLE1_CHATD</name>